<accession>P80695</accession>
<accession>G8WBD9</accession>
<feature type="signal peptide" evidence="4 5">
    <location>
        <begin position="1"/>
        <end position="27"/>
    </location>
</feature>
<feature type="chain" id="PRO_0000064108" description="Primary amine oxidase">
    <location>
        <begin position="28"/>
        <end position="752"/>
    </location>
</feature>
<feature type="active site" description="Proton acceptor" evidence="1">
    <location>
        <position position="410"/>
    </location>
</feature>
<feature type="active site" description="Schiff-base intermediate with substrate; via topaquinone" evidence="1">
    <location>
        <position position="493"/>
    </location>
</feature>
<feature type="binding site" evidence="1">
    <location>
        <begin position="408"/>
        <end position="419"/>
    </location>
    <ligand>
        <name>substrate</name>
    </ligand>
</feature>
<feature type="binding site" evidence="2">
    <location>
        <begin position="490"/>
        <end position="495"/>
    </location>
    <ligand>
        <name>substrate</name>
    </ligand>
</feature>
<feature type="binding site" evidence="1">
    <location>
        <position position="551"/>
    </location>
    <ligand>
        <name>Cu cation</name>
        <dbReference type="ChEBI" id="CHEBI:23378"/>
    </ligand>
</feature>
<feature type="binding site" evidence="1">
    <location>
        <position position="553"/>
    </location>
    <ligand>
        <name>Cu cation</name>
        <dbReference type="ChEBI" id="CHEBI:23378"/>
    </ligand>
</feature>
<feature type="binding site" evidence="2">
    <location>
        <position position="560"/>
    </location>
    <ligand>
        <name>Ca(2+)</name>
        <dbReference type="ChEBI" id="CHEBI:29108"/>
        <label>1</label>
    </ligand>
</feature>
<feature type="binding site" evidence="3">
    <location>
        <position position="560"/>
    </location>
    <ligand>
        <name>Mn(2+)</name>
        <dbReference type="ChEBI" id="CHEBI:29035"/>
    </ligand>
</feature>
<feature type="binding site" evidence="2">
    <location>
        <position position="561"/>
    </location>
    <ligand>
        <name>Ca(2+)</name>
        <dbReference type="ChEBI" id="CHEBI:29108"/>
        <label>1</label>
    </ligand>
</feature>
<feature type="binding site" evidence="2">
    <location>
        <position position="562"/>
    </location>
    <ligand>
        <name>Ca(2+)</name>
        <dbReference type="ChEBI" id="CHEBI:29108"/>
        <label>1</label>
    </ligand>
</feature>
<feature type="binding site" evidence="3">
    <location>
        <position position="562"/>
    </location>
    <ligand>
        <name>Mn(2+)</name>
        <dbReference type="ChEBI" id="CHEBI:29035"/>
    </ligand>
</feature>
<feature type="binding site" evidence="2">
    <location>
        <position position="600"/>
    </location>
    <ligand>
        <name>Ca(2+)</name>
        <dbReference type="ChEBI" id="CHEBI:29108"/>
        <label>2</label>
    </ligand>
</feature>
<feature type="binding site" evidence="2">
    <location>
        <position position="694"/>
    </location>
    <ligand>
        <name>Ca(2+)</name>
        <dbReference type="ChEBI" id="CHEBI:29108"/>
        <label>2</label>
    </ligand>
</feature>
<feature type="binding site" evidence="2">
    <location>
        <position position="697"/>
    </location>
    <ligand>
        <name>Ca(2+)</name>
        <dbReference type="ChEBI" id="CHEBI:29108"/>
        <label>2</label>
    </ligand>
</feature>
<feature type="binding site" evidence="2">
    <location>
        <position position="699"/>
    </location>
    <ligand>
        <name>Ca(2+)</name>
        <dbReference type="ChEBI" id="CHEBI:29108"/>
        <label>2</label>
    </ligand>
</feature>
<feature type="binding site" evidence="2">
    <location>
        <position position="705"/>
    </location>
    <ligand>
        <name>Ca(2+)</name>
        <dbReference type="ChEBI" id="CHEBI:29108"/>
        <label>1</label>
    </ligand>
</feature>
<feature type="binding site" evidence="3">
    <location>
        <position position="705"/>
    </location>
    <ligand>
        <name>Mn(2+)</name>
        <dbReference type="ChEBI" id="CHEBI:29035"/>
    </ligand>
</feature>
<feature type="binding site" evidence="1">
    <location>
        <position position="716"/>
    </location>
    <ligand>
        <name>Cu cation</name>
        <dbReference type="ChEBI" id="CHEBI:23378"/>
    </ligand>
</feature>
<feature type="modified residue" description="2',4',5'-topaquinone" evidence="1">
    <location>
        <position position="493"/>
    </location>
</feature>
<keyword id="KW-0128">Catecholamine metabolism</keyword>
<keyword id="KW-0186">Copper</keyword>
<keyword id="KW-0903">Direct protein sequencing</keyword>
<keyword id="KW-0464">Manganese</keyword>
<keyword id="KW-0479">Metal-binding</keyword>
<keyword id="KW-0560">Oxidoreductase</keyword>
<keyword id="KW-0574">Periplasm</keyword>
<keyword id="KW-0732">Signal</keyword>
<keyword id="KW-0801">TPQ</keyword>
<reference key="1">
    <citation type="journal article" date="2012" name="J. Bacteriol.">
        <title>Complete genome sequence of Klebsiella oxytoca KCTC 1686, used in production of 2,3-butanediol.</title>
        <authorList>
            <person name="Shin S.H."/>
            <person name="Kim S."/>
            <person name="Kim J.Y."/>
            <person name="Lee S."/>
            <person name="Um Y."/>
            <person name="Oh M.K."/>
            <person name="Kim Y.R."/>
            <person name="Lee J."/>
            <person name="Yang K.S."/>
        </authorList>
    </citation>
    <scope>NUCLEOTIDE SEQUENCE [LARGE SCALE GENOMIC DNA]</scope>
    <source>
        <strain>ATCC 8724 / DSM 4798 / JCM 20051 / NBRC 3318 / NRRL B-199 / KCTC 1686 / BUCSAV 143 / CCM 1901</strain>
    </source>
</reference>
<reference key="2">
    <citation type="journal article" date="1997" name="Microbiology">
        <title>Distribution of amine oxidases and amine dehydrogenases in bacteria grown on primary amines and characterization of the amine oxidase from Klebsiella oxytoca.</title>
        <authorList>
            <person name="Hacisalihoglu A."/>
            <person name="Jongejan J.A."/>
            <person name="Duine J.A."/>
        </authorList>
    </citation>
    <scope>PROTEIN SEQUENCE OF 28-47 AND 662-697</scope>
    <scope>FUNCTION</scope>
    <scope>CATALYTIC ACTIVITY</scope>
    <scope>COFACTOR</scope>
    <scope>SUBUNIT</scope>
    <scope>SUBCELLULAR LOCATION</scope>
    <source>
        <strain>ATCC 8724 / DSM 4798 / JCM 20051 / NBRC 3318 / NRRL B-199 / KCTC 1686 / BUCSAV 143 / CCM 1901</strain>
    </source>
</reference>
<protein>
    <recommendedName>
        <fullName>Primary amine oxidase</fullName>
        <ecNumber evidence="5">1.4.3.21</ecNumber>
    </recommendedName>
    <alternativeName>
        <fullName>Monamine oxidase</fullName>
    </alternativeName>
    <alternativeName>
        <fullName>Tyramine oxidase</fullName>
    </alternativeName>
</protein>
<name>AMO_KLEM8</name>
<organism>
    <name type="scientific">Klebsiella michiganensis (strain ATCC 8724 / DSM 4798 / JCM 20051 / NBRC 3318 / NRRL B-199 / KCTC 1686 / BUCSAV 143 / CCM 1901)</name>
    <dbReference type="NCBI Taxonomy" id="1006551"/>
    <lineage>
        <taxon>Bacteria</taxon>
        <taxon>Pseudomonadati</taxon>
        <taxon>Pseudomonadota</taxon>
        <taxon>Gammaproteobacteria</taxon>
        <taxon>Enterobacterales</taxon>
        <taxon>Enterobacteriaceae</taxon>
        <taxon>Klebsiella/Raoultella group</taxon>
        <taxon>Klebsiella</taxon>
    </lineage>
</organism>
<gene>
    <name type="primary">maoA</name>
    <name type="synonym">tynA</name>
    <name type="ordered locus">KOX_19410</name>
</gene>
<comment type="function">
    <text evidence="5">Active on tyramine, tryptamine, beta-phenethylamine and dopamine.</text>
</comment>
<comment type="catalytic activity">
    <reaction evidence="5">
        <text>a primary methyl amine + O2 + H2O = an aldehyde + H2O2 + NH4(+)</text>
        <dbReference type="Rhea" id="RHEA:16153"/>
        <dbReference type="ChEBI" id="CHEBI:15377"/>
        <dbReference type="ChEBI" id="CHEBI:15379"/>
        <dbReference type="ChEBI" id="CHEBI:16240"/>
        <dbReference type="ChEBI" id="CHEBI:17478"/>
        <dbReference type="ChEBI" id="CHEBI:28938"/>
        <dbReference type="ChEBI" id="CHEBI:228804"/>
        <dbReference type="EC" id="1.4.3.21"/>
    </reaction>
</comment>
<comment type="cofactor">
    <cofactor evidence="5">
        <name>Cu cation</name>
        <dbReference type="ChEBI" id="CHEBI:23378"/>
    </cofactor>
    <text evidence="5">Binds 1 copper ion per subunit.</text>
</comment>
<comment type="cofactor">
    <cofactor evidence="2">
        <name>Ca(2+)</name>
        <dbReference type="ChEBI" id="CHEBI:29108"/>
    </cofactor>
    <text evidence="2">Binds 2 calcium ions per subunit.</text>
</comment>
<comment type="cofactor">
    <cofactor evidence="2">
        <name>L-topaquinone</name>
        <dbReference type="ChEBI" id="CHEBI:79027"/>
    </cofactor>
    <text evidence="2">Contains 1 topaquinone per subunit.</text>
</comment>
<comment type="cofactor">
    <cofactor evidence="3">
        <name>Mn(2+)</name>
        <dbReference type="ChEBI" id="CHEBI:29035"/>
    </cofactor>
    <text evidence="3">Binds 1 Mn(2+) ion per subunit.</text>
</comment>
<comment type="subunit">
    <text evidence="5">Homodimer.</text>
</comment>
<comment type="subcellular location">
    <subcellularLocation>
        <location evidence="5">Periplasm</location>
    </subcellularLocation>
</comment>
<comment type="PTM">
    <text evidence="2">Topaquinone (TPQ) is generated by copper-dependent autoxidation of a specific tyrosyl residue.</text>
</comment>
<comment type="similarity">
    <text evidence="6">Belongs to the copper/topaquinone oxidase family.</text>
</comment>
<sequence length="752" mass="83624">MAILSPRKTALALAVALSCAWQSPAFAHGGEAHMVPMDKTLQDFGADVQWDDYAQMFTLIKDGAYVKVKPGAKTAIVNGKTLELQVPVVMKDGKAWVSDTFINDVFQSGLDQTFQVEKRPHPLNSLSAAEISAAVAIVKAAADFKPNTRFTEISLREPDKKAVWDFALNGTPVNAPRAADVIMLDGKHVIEAVVDLQNKKVLSWTPIKDAHGMVLLDDFASVQNIINASSEFAEVLKKHGIDDPSKVITTPLTVGYFDGKDGLKQDARLLKVVSYLDVGDGNYWAHPIENLVAVVDLEQKKIIKIEEGPTIPVPMAARPYDGRDRVAPKIKPLDIIEPEGKNYTITGDMIHWQNWDFHLRMNSRVGPILSTVTYNDNGKKRQVMYEGSLGGMIVPYGDPDVGWYFKAYLDSGDYGMGTLTSPIVRGKDAPSNAVLLDETIADYTGTPTTIPRAIAIFERYAGPEYKHQEMGKPNVSTERRELVVRWISTVGNYDYIFDWVFHENGTIGIDAGATGIEAVKGVQAKTMHDPSAKEDTRYGTLIDHNIVGTTHQHIYNFRLDLDVDGENNTLVAMDPEVKPNTAGGPRTSTMQINQYTIDSEQKAAQKFDPGTIRLLSNITKENRMGNPVSYQIIPYAGGTHPVATGAKFAPDEWIYHRLSFMDKQLWVTRYHPTERFPEGKYPNRSIHDTGLGQYAKDDESLDNHDDVVWITTGTTHVARAEEWPIMPTEWAHALLKPWNFFDETPTLGEKKE</sequence>
<evidence type="ECO:0000250" key="1">
    <source>
        <dbReference type="UniProtKB" id="P12807"/>
    </source>
</evidence>
<evidence type="ECO:0000250" key="2">
    <source>
        <dbReference type="UniProtKB" id="P46883"/>
    </source>
</evidence>
<evidence type="ECO:0000250" key="3">
    <source>
        <dbReference type="UniProtKB" id="Q43077"/>
    </source>
</evidence>
<evidence type="ECO:0000255" key="4">
    <source>
        <dbReference type="PROSITE-ProRule" id="PRU00303"/>
    </source>
</evidence>
<evidence type="ECO:0000269" key="5">
    <source>
    </source>
</evidence>
<evidence type="ECO:0000305" key="6"/>
<dbReference type="EC" id="1.4.3.21" evidence="5"/>
<dbReference type="EMBL" id="CP003218">
    <property type="protein sequence ID" value="AEX05604.1"/>
    <property type="molecule type" value="Genomic_DNA"/>
</dbReference>
<dbReference type="RefSeq" id="WP_014229178.1">
    <property type="nucleotide sequence ID" value="NC_016612.1"/>
</dbReference>
<dbReference type="SMR" id="P80695"/>
<dbReference type="KEGG" id="kox:KOX_19410"/>
<dbReference type="PATRIC" id="fig|1006551.4.peg.3881"/>
<dbReference type="HOGENOM" id="CLU_011500_5_0_6"/>
<dbReference type="Proteomes" id="UP000007843">
    <property type="component" value="Chromosome"/>
</dbReference>
<dbReference type="GO" id="GO:0042597">
    <property type="term" value="C:periplasmic space"/>
    <property type="evidence" value="ECO:0007669"/>
    <property type="project" value="UniProtKB-SubCell"/>
</dbReference>
<dbReference type="GO" id="GO:0005507">
    <property type="term" value="F:copper ion binding"/>
    <property type="evidence" value="ECO:0007669"/>
    <property type="project" value="InterPro"/>
</dbReference>
<dbReference type="GO" id="GO:0008131">
    <property type="term" value="F:primary methylamine oxidase activity"/>
    <property type="evidence" value="ECO:0007669"/>
    <property type="project" value="UniProtKB-EC"/>
</dbReference>
<dbReference type="GO" id="GO:0048038">
    <property type="term" value="F:quinone binding"/>
    <property type="evidence" value="ECO:0007669"/>
    <property type="project" value="InterPro"/>
</dbReference>
<dbReference type="GO" id="GO:0006584">
    <property type="term" value="P:catecholamine metabolic process"/>
    <property type="evidence" value="ECO:0007669"/>
    <property type="project" value="UniProtKB-KW"/>
</dbReference>
<dbReference type="FunFam" id="3.10.450.40:FF:000025">
    <property type="entry name" value="Primary amine oxidase"/>
    <property type="match status" value="1"/>
</dbReference>
<dbReference type="Gene3D" id="3.10.450.40">
    <property type="match status" value="2"/>
</dbReference>
<dbReference type="Gene3D" id="2.70.98.20">
    <property type="entry name" value="Copper amine oxidase, catalytic domain"/>
    <property type="match status" value="1"/>
</dbReference>
<dbReference type="Gene3D" id="3.30.457.10">
    <property type="entry name" value="Copper amine oxidase-like, N-terminal domain"/>
    <property type="match status" value="1"/>
</dbReference>
<dbReference type="InterPro" id="IPR049947">
    <property type="entry name" value="Cu_Am_Ox_Cu-bd"/>
</dbReference>
<dbReference type="InterPro" id="IPR049948">
    <property type="entry name" value="Cu_Am_ox_TPQ-bd"/>
</dbReference>
<dbReference type="InterPro" id="IPR000269">
    <property type="entry name" value="Cu_amine_oxidase"/>
</dbReference>
<dbReference type="InterPro" id="IPR012854">
    <property type="entry name" value="Cu_amine_oxidase-like_N"/>
</dbReference>
<dbReference type="InterPro" id="IPR015798">
    <property type="entry name" value="Cu_amine_oxidase_C"/>
</dbReference>
<dbReference type="InterPro" id="IPR036460">
    <property type="entry name" value="Cu_amine_oxidase_C_sf"/>
</dbReference>
<dbReference type="InterPro" id="IPR016182">
    <property type="entry name" value="Cu_amine_oxidase_N-reg"/>
</dbReference>
<dbReference type="InterPro" id="IPR015800">
    <property type="entry name" value="Cu_amine_oxidase_N2"/>
</dbReference>
<dbReference type="InterPro" id="IPR015802">
    <property type="entry name" value="Cu_amine_oxidase_N3"/>
</dbReference>
<dbReference type="InterPro" id="IPR036582">
    <property type="entry name" value="Mao_N_sf"/>
</dbReference>
<dbReference type="NCBIfam" id="NF011285">
    <property type="entry name" value="PRK14696.1"/>
    <property type="match status" value="1"/>
</dbReference>
<dbReference type="PANTHER" id="PTHR10638:SF41">
    <property type="entry name" value="AMINE OXIDASE"/>
    <property type="match status" value="1"/>
</dbReference>
<dbReference type="PANTHER" id="PTHR10638">
    <property type="entry name" value="COPPER AMINE OXIDASE"/>
    <property type="match status" value="1"/>
</dbReference>
<dbReference type="Pfam" id="PF01179">
    <property type="entry name" value="Cu_amine_oxid"/>
    <property type="match status" value="1"/>
</dbReference>
<dbReference type="Pfam" id="PF07833">
    <property type="entry name" value="Cu_amine_oxidN1"/>
    <property type="match status" value="1"/>
</dbReference>
<dbReference type="Pfam" id="PF02727">
    <property type="entry name" value="Cu_amine_oxidN2"/>
    <property type="match status" value="1"/>
</dbReference>
<dbReference type="Pfam" id="PF02728">
    <property type="entry name" value="Cu_amine_oxidN3"/>
    <property type="match status" value="1"/>
</dbReference>
<dbReference type="SUPFAM" id="SSF49998">
    <property type="entry name" value="Amine oxidase catalytic domain"/>
    <property type="match status" value="1"/>
</dbReference>
<dbReference type="SUPFAM" id="SSF54416">
    <property type="entry name" value="Amine oxidase N-terminal region"/>
    <property type="match status" value="2"/>
</dbReference>
<dbReference type="SUPFAM" id="SSF55383">
    <property type="entry name" value="Copper amine oxidase, domain N"/>
    <property type="match status" value="1"/>
</dbReference>
<dbReference type="PROSITE" id="PS01164">
    <property type="entry name" value="COPPER_AMINE_OXID_1"/>
    <property type="match status" value="1"/>
</dbReference>
<dbReference type="PROSITE" id="PS01165">
    <property type="entry name" value="COPPER_AMINE_OXID_2"/>
    <property type="match status" value="1"/>
</dbReference>
<dbReference type="PROSITE" id="PS51257">
    <property type="entry name" value="PROKAR_LIPOPROTEIN"/>
    <property type="match status" value="1"/>
</dbReference>
<proteinExistence type="evidence at protein level"/>